<feature type="chain" id="PRO_1000084031" description="Thiosulfate sulfurtransferase GlpE">
    <location>
        <begin position="1"/>
        <end position="108"/>
    </location>
</feature>
<feature type="domain" description="Rhodanese" evidence="1">
    <location>
        <begin position="17"/>
        <end position="105"/>
    </location>
</feature>
<feature type="active site" description="Cysteine persulfide intermediate" evidence="1">
    <location>
        <position position="65"/>
    </location>
</feature>
<protein>
    <recommendedName>
        <fullName evidence="1">Thiosulfate sulfurtransferase GlpE</fullName>
        <ecNumber evidence="1">2.8.1.1</ecNumber>
    </recommendedName>
</protein>
<comment type="function">
    <text evidence="1">Transferase that catalyzes the transfer of sulfur from thiosulfate to thiophilic acceptors such as cyanide or dithiols. May function in a CysM-independent thiosulfate assimilation pathway by catalyzing the conversion of thiosulfate to sulfite, which can then be used for L-cysteine biosynthesis.</text>
</comment>
<comment type="catalytic activity">
    <reaction evidence="1">
        <text>thiosulfate + hydrogen cyanide = thiocyanate + sulfite + 2 H(+)</text>
        <dbReference type="Rhea" id="RHEA:16881"/>
        <dbReference type="ChEBI" id="CHEBI:15378"/>
        <dbReference type="ChEBI" id="CHEBI:17359"/>
        <dbReference type="ChEBI" id="CHEBI:18022"/>
        <dbReference type="ChEBI" id="CHEBI:18407"/>
        <dbReference type="ChEBI" id="CHEBI:33542"/>
        <dbReference type="EC" id="2.8.1.1"/>
    </reaction>
</comment>
<comment type="catalytic activity">
    <reaction evidence="1">
        <text>thiosulfate + [thioredoxin]-dithiol = [thioredoxin]-disulfide + hydrogen sulfide + sulfite + 2 H(+)</text>
        <dbReference type="Rhea" id="RHEA:83859"/>
        <dbReference type="Rhea" id="RHEA-COMP:10698"/>
        <dbReference type="Rhea" id="RHEA-COMP:10700"/>
        <dbReference type="ChEBI" id="CHEBI:15378"/>
        <dbReference type="ChEBI" id="CHEBI:17359"/>
        <dbReference type="ChEBI" id="CHEBI:29919"/>
        <dbReference type="ChEBI" id="CHEBI:29950"/>
        <dbReference type="ChEBI" id="CHEBI:33542"/>
        <dbReference type="ChEBI" id="CHEBI:50058"/>
    </reaction>
</comment>
<comment type="subcellular location">
    <subcellularLocation>
        <location evidence="1">Cytoplasm</location>
    </subcellularLocation>
</comment>
<comment type="similarity">
    <text evidence="1">Belongs to the GlpE family.</text>
</comment>
<keyword id="KW-0963">Cytoplasm</keyword>
<keyword id="KW-1185">Reference proteome</keyword>
<keyword id="KW-0808">Transferase</keyword>
<name>GLPE_SALAR</name>
<accession>A9MMA6</accession>
<organism>
    <name type="scientific">Salmonella arizonae (strain ATCC BAA-731 / CDC346-86 / RSK2980)</name>
    <dbReference type="NCBI Taxonomy" id="41514"/>
    <lineage>
        <taxon>Bacteria</taxon>
        <taxon>Pseudomonadati</taxon>
        <taxon>Pseudomonadota</taxon>
        <taxon>Gammaproteobacteria</taxon>
        <taxon>Enterobacterales</taxon>
        <taxon>Enterobacteriaceae</taxon>
        <taxon>Salmonella</taxon>
    </lineage>
</organism>
<proteinExistence type="inferred from homology"/>
<evidence type="ECO:0000255" key="1">
    <source>
        <dbReference type="HAMAP-Rule" id="MF_01009"/>
    </source>
</evidence>
<sequence length="108" mass="12038">MEQFECITVEEAYQKLHQGAAVLVDIRDPQSYAMGHAPQAFHLTNDTLGAFMREYDFDTAVMVMCYHGNSSKGAAQYLLQQGYDAVYSIDGGFEAWHRHFPADVANGA</sequence>
<gene>
    <name evidence="1" type="primary">glpE</name>
    <name type="ordered locus">SARI_04096</name>
</gene>
<dbReference type="EC" id="2.8.1.1" evidence="1"/>
<dbReference type="EMBL" id="CP000880">
    <property type="protein sequence ID" value="ABX23885.1"/>
    <property type="molecule type" value="Genomic_DNA"/>
</dbReference>
<dbReference type="SMR" id="A9MMA6"/>
<dbReference type="STRING" id="41514.SARI_04096"/>
<dbReference type="KEGG" id="ses:SARI_04096"/>
<dbReference type="HOGENOM" id="CLU_089574_14_0_6"/>
<dbReference type="Proteomes" id="UP000002084">
    <property type="component" value="Chromosome"/>
</dbReference>
<dbReference type="GO" id="GO:0005737">
    <property type="term" value="C:cytoplasm"/>
    <property type="evidence" value="ECO:0007669"/>
    <property type="project" value="UniProtKB-SubCell"/>
</dbReference>
<dbReference type="GO" id="GO:0004792">
    <property type="term" value="F:thiosulfate-cyanide sulfurtransferase activity"/>
    <property type="evidence" value="ECO:0007669"/>
    <property type="project" value="UniProtKB-UniRule"/>
</dbReference>
<dbReference type="GO" id="GO:0006071">
    <property type="term" value="P:glycerol metabolic process"/>
    <property type="evidence" value="ECO:0007669"/>
    <property type="project" value="UniProtKB-UniRule"/>
</dbReference>
<dbReference type="CDD" id="cd01444">
    <property type="entry name" value="GlpE_ST"/>
    <property type="match status" value="1"/>
</dbReference>
<dbReference type="FunFam" id="3.40.250.10:FF:000007">
    <property type="entry name" value="Thiosulfate sulfurtransferase GlpE"/>
    <property type="match status" value="1"/>
</dbReference>
<dbReference type="Gene3D" id="3.40.250.10">
    <property type="entry name" value="Rhodanese-like domain"/>
    <property type="match status" value="1"/>
</dbReference>
<dbReference type="HAMAP" id="MF_01009">
    <property type="entry name" value="Thiosulf_sulfurtr"/>
    <property type="match status" value="1"/>
</dbReference>
<dbReference type="InterPro" id="IPR050229">
    <property type="entry name" value="GlpE_sulfurtransferase"/>
</dbReference>
<dbReference type="InterPro" id="IPR001763">
    <property type="entry name" value="Rhodanese-like_dom"/>
</dbReference>
<dbReference type="InterPro" id="IPR036873">
    <property type="entry name" value="Rhodanese-like_dom_sf"/>
</dbReference>
<dbReference type="InterPro" id="IPR023695">
    <property type="entry name" value="Thiosulf_sulfurTrfase"/>
</dbReference>
<dbReference type="NCBIfam" id="NF001195">
    <property type="entry name" value="PRK00162.1"/>
    <property type="match status" value="1"/>
</dbReference>
<dbReference type="PANTHER" id="PTHR43031">
    <property type="entry name" value="FAD-DEPENDENT OXIDOREDUCTASE"/>
    <property type="match status" value="1"/>
</dbReference>
<dbReference type="PANTHER" id="PTHR43031:SF6">
    <property type="entry name" value="THIOSULFATE SULFURTRANSFERASE GLPE"/>
    <property type="match status" value="1"/>
</dbReference>
<dbReference type="Pfam" id="PF00581">
    <property type="entry name" value="Rhodanese"/>
    <property type="match status" value="1"/>
</dbReference>
<dbReference type="SMART" id="SM00450">
    <property type="entry name" value="RHOD"/>
    <property type="match status" value="1"/>
</dbReference>
<dbReference type="SUPFAM" id="SSF52821">
    <property type="entry name" value="Rhodanese/Cell cycle control phosphatase"/>
    <property type="match status" value="1"/>
</dbReference>
<dbReference type="PROSITE" id="PS50206">
    <property type="entry name" value="RHODANESE_3"/>
    <property type="match status" value="1"/>
</dbReference>
<reference key="1">
    <citation type="submission" date="2007-11" db="EMBL/GenBank/DDBJ databases">
        <authorList>
            <consortium name="The Salmonella enterica serovar Arizonae Genome Sequencing Project"/>
            <person name="McClelland M."/>
            <person name="Sanderson E.K."/>
            <person name="Porwollik S."/>
            <person name="Spieth J."/>
            <person name="Clifton W.S."/>
            <person name="Fulton R."/>
            <person name="Chunyan W."/>
            <person name="Wollam A."/>
            <person name="Shah N."/>
            <person name="Pepin K."/>
            <person name="Bhonagiri V."/>
            <person name="Nash W."/>
            <person name="Johnson M."/>
            <person name="Thiruvilangam P."/>
            <person name="Wilson R."/>
        </authorList>
    </citation>
    <scope>NUCLEOTIDE SEQUENCE [LARGE SCALE GENOMIC DNA]</scope>
    <source>
        <strain>ATCC BAA-731 / CDC346-86 / RSK2980</strain>
    </source>
</reference>